<geneLocation type="mitochondrion"/>
<evidence type="ECO:0000250" key="1">
    <source>
        <dbReference type="UniProtKB" id="P03891"/>
    </source>
</evidence>
<evidence type="ECO:0000250" key="2">
    <source>
        <dbReference type="UniProtKB" id="P03892"/>
    </source>
</evidence>
<evidence type="ECO:0000255" key="3"/>
<evidence type="ECO:0000269" key="4">
    <source>
    </source>
</evidence>
<evidence type="ECO:0000305" key="5"/>
<evidence type="ECO:0000312" key="6">
    <source>
        <dbReference type="MGI" id="MGI:102500"/>
    </source>
</evidence>
<evidence type="ECO:0007744" key="7">
    <source>
        <dbReference type="PDB" id="8PW5"/>
    </source>
</evidence>
<evidence type="ECO:0007829" key="8">
    <source>
        <dbReference type="PDB" id="6ZTQ"/>
    </source>
</evidence>
<evidence type="ECO:0007829" key="9">
    <source>
        <dbReference type="PDB" id="7B93"/>
    </source>
</evidence>
<evidence type="ECO:0007829" key="10">
    <source>
        <dbReference type="PDB" id="8CA3"/>
    </source>
</evidence>
<evidence type="ECO:0007829" key="11">
    <source>
        <dbReference type="PDB" id="8IC4"/>
    </source>
</evidence>
<evidence type="ECO:0007829" key="12">
    <source>
        <dbReference type="PDB" id="8OM1"/>
    </source>
</evidence>
<name>NU2M_MOUSE</name>
<proteinExistence type="evidence at protein level"/>
<gene>
    <name evidence="6" type="primary">mt-Nd2</name>
    <name type="synonym">Nd2</name>
</gene>
<comment type="function">
    <text evidence="1 4">Core subunit of the mitochondrial membrane respiratory chain NADH dehydrogenase (Complex I) which catalyzes electron transfer from NADH through the respiratory chain, using ubiquinone as an electron acceptor (PubMed:38575788). Essential for the catalytic activity and assembly of complex I (By similarity).</text>
</comment>
<comment type="catalytic activity">
    <reaction evidence="1">
        <text>a ubiquinone + NADH + 5 H(+)(in) = a ubiquinol + NAD(+) + 4 H(+)(out)</text>
        <dbReference type="Rhea" id="RHEA:29091"/>
        <dbReference type="Rhea" id="RHEA-COMP:9565"/>
        <dbReference type="Rhea" id="RHEA-COMP:9566"/>
        <dbReference type="ChEBI" id="CHEBI:15378"/>
        <dbReference type="ChEBI" id="CHEBI:16389"/>
        <dbReference type="ChEBI" id="CHEBI:17976"/>
        <dbReference type="ChEBI" id="CHEBI:57540"/>
        <dbReference type="ChEBI" id="CHEBI:57945"/>
        <dbReference type="EC" id="7.1.1.2"/>
    </reaction>
</comment>
<comment type="subunit">
    <text evidence="1 2 4">Core subunit of respiratory chain NADH dehydrogenase (Complex I) which is composed of 45 different subunits (PubMed:38575788). Interacts with TMEM242 (By similarity).</text>
</comment>
<comment type="subcellular location">
    <subcellularLocation>
        <location evidence="4">Mitochondrion inner membrane</location>
        <topology evidence="3">Multi-pass membrane protein</topology>
    </subcellularLocation>
</comment>
<comment type="similarity">
    <text evidence="5">Belongs to the complex I subunit 2 family.</text>
</comment>
<organism>
    <name type="scientific">Mus musculus</name>
    <name type="common">Mouse</name>
    <dbReference type="NCBI Taxonomy" id="10090"/>
    <lineage>
        <taxon>Eukaryota</taxon>
        <taxon>Metazoa</taxon>
        <taxon>Chordata</taxon>
        <taxon>Craniata</taxon>
        <taxon>Vertebrata</taxon>
        <taxon>Euteleostomi</taxon>
        <taxon>Mammalia</taxon>
        <taxon>Eutheria</taxon>
        <taxon>Euarchontoglires</taxon>
        <taxon>Glires</taxon>
        <taxon>Rodentia</taxon>
        <taxon>Myomorpha</taxon>
        <taxon>Muroidea</taxon>
        <taxon>Muridae</taxon>
        <taxon>Murinae</taxon>
        <taxon>Mus</taxon>
        <taxon>Mus</taxon>
    </lineage>
</organism>
<feature type="chain" id="PRO_0000117607" description="NADH-ubiquinone oxidoreductase chain 2">
    <location>
        <begin position="1"/>
        <end position="345"/>
    </location>
</feature>
<feature type="transmembrane region" description="Helical" evidence="3">
    <location>
        <begin position="1"/>
        <end position="21"/>
    </location>
</feature>
<feature type="transmembrane region" description="Helical" evidence="3">
    <location>
        <begin position="25"/>
        <end position="45"/>
    </location>
</feature>
<feature type="transmembrane region" description="Helical" evidence="3">
    <location>
        <begin position="56"/>
        <end position="76"/>
    </location>
</feature>
<feature type="transmembrane region" description="Helical" evidence="3">
    <location>
        <begin position="92"/>
        <end position="114"/>
    </location>
</feature>
<feature type="transmembrane region" description="Helical" evidence="3">
    <location>
        <begin position="149"/>
        <end position="171"/>
    </location>
</feature>
<feature type="transmembrane region" description="Helical" evidence="3">
    <location>
        <begin position="178"/>
        <end position="198"/>
    </location>
</feature>
<feature type="transmembrane region" description="Helical" evidence="3">
    <location>
        <begin position="200"/>
        <end position="220"/>
    </location>
</feature>
<feature type="transmembrane region" description="Helical" evidence="3">
    <location>
        <begin position="241"/>
        <end position="261"/>
    </location>
</feature>
<feature type="transmembrane region" description="Helical" evidence="3">
    <location>
        <begin position="274"/>
        <end position="294"/>
    </location>
</feature>
<feature type="transmembrane region" description="Helical" evidence="3">
    <location>
        <begin position="324"/>
        <end position="344"/>
    </location>
</feature>
<feature type="sequence conflict" description="In Ref. 1; AAB48645/CAA24081 and 2; AAP89024." evidence="5" ref="1 2">
    <original>T</original>
    <variation>I</variation>
    <location>
        <position position="294"/>
    </location>
</feature>
<feature type="helix" evidence="12">
    <location>
        <begin position="3"/>
        <end position="22"/>
    </location>
</feature>
<feature type="helix" evidence="12">
    <location>
        <begin position="26"/>
        <end position="44"/>
    </location>
</feature>
<feature type="turn" evidence="12">
    <location>
        <begin position="45"/>
        <end position="47"/>
    </location>
</feature>
<feature type="helix" evidence="12">
    <location>
        <begin position="50"/>
        <end position="81"/>
    </location>
</feature>
<feature type="strand" evidence="12">
    <location>
        <begin position="82"/>
        <end position="85"/>
    </location>
</feature>
<feature type="strand" evidence="9">
    <location>
        <begin position="88"/>
        <end position="90"/>
    </location>
</feature>
<feature type="helix" evidence="12">
    <location>
        <begin position="92"/>
        <end position="106"/>
    </location>
</feature>
<feature type="turn" evidence="10">
    <location>
        <begin position="109"/>
        <end position="113"/>
    </location>
</feature>
<feature type="helix" evidence="12">
    <location>
        <begin position="114"/>
        <end position="120"/>
    </location>
</feature>
<feature type="helix" evidence="12">
    <location>
        <begin position="124"/>
        <end position="131"/>
    </location>
</feature>
<feature type="helix" evidence="12">
    <location>
        <begin position="133"/>
        <end position="135"/>
    </location>
</feature>
<feature type="helix" evidence="12">
    <location>
        <begin position="136"/>
        <end position="144"/>
    </location>
</feature>
<feature type="helix" evidence="12">
    <location>
        <begin position="145"/>
        <end position="148"/>
    </location>
</feature>
<feature type="helix" evidence="12">
    <location>
        <begin position="151"/>
        <end position="170"/>
    </location>
</feature>
<feature type="helix" evidence="12">
    <location>
        <begin position="175"/>
        <end position="193"/>
    </location>
</feature>
<feature type="turn" evidence="12">
    <location>
        <begin position="194"/>
        <end position="196"/>
    </location>
</feature>
<feature type="helix" evidence="12">
    <location>
        <begin position="198"/>
        <end position="222"/>
    </location>
</feature>
<feature type="helix" evidence="12">
    <location>
        <begin position="227"/>
        <end position="230"/>
    </location>
</feature>
<feature type="helix" evidence="12">
    <location>
        <begin position="233"/>
        <end position="236"/>
    </location>
</feature>
<feature type="helix" evidence="12">
    <location>
        <begin position="238"/>
        <end position="240"/>
    </location>
</feature>
<feature type="helix" evidence="12">
    <location>
        <begin position="241"/>
        <end position="251"/>
    </location>
</feature>
<feature type="strand" evidence="11">
    <location>
        <begin position="255"/>
        <end position="257"/>
    </location>
</feature>
<feature type="helix" evidence="12">
    <location>
        <begin position="260"/>
        <end position="272"/>
    </location>
</feature>
<feature type="helix" evidence="12">
    <location>
        <begin position="276"/>
        <end position="300"/>
    </location>
</feature>
<feature type="strand" evidence="9">
    <location>
        <begin position="308"/>
        <end position="310"/>
    </location>
</feature>
<feature type="helix" evidence="12">
    <location>
        <begin position="311"/>
        <end position="316"/>
    </location>
</feature>
<feature type="helix" evidence="12">
    <location>
        <begin position="324"/>
        <end position="332"/>
    </location>
</feature>
<feature type="strand" evidence="8">
    <location>
        <begin position="333"/>
        <end position="335"/>
    </location>
</feature>
<feature type="helix" evidence="12">
    <location>
        <begin position="337"/>
        <end position="340"/>
    </location>
</feature>
<feature type="helix" evidence="12">
    <location>
        <begin position="341"/>
        <end position="344"/>
    </location>
</feature>
<accession>P03893</accession>
<dbReference type="EC" id="7.1.1.2" evidence="1"/>
<dbReference type="EMBL" id="J01420">
    <property type="protein sequence ID" value="AAB48645.1"/>
    <property type="molecule type" value="Genomic_DNA"/>
</dbReference>
<dbReference type="EMBL" id="V00711">
    <property type="protein sequence ID" value="CAA24081.1"/>
    <property type="molecule type" value="Genomic_DNA"/>
</dbReference>
<dbReference type="EMBL" id="AY172335">
    <property type="protein sequence ID" value="AAN85123.1"/>
    <property type="molecule type" value="Genomic_DNA"/>
</dbReference>
<dbReference type="EMBL" id="AY339599">
    <property type="protein sequence ID" value="AAP89024.1"/>
    <property type="molecule type" value="Genomic_DNA"/>
</dbReference>
<dbReference type="PIR" id="A00416">
    <property type="entry name" value="QXMS2M"/>
</dbReference>
<dbReference type="RefSeq" id="NP_904329.1">
    <property type="nucleotide sequence ID" value="NC_005089.1"/>
</dbReference>
<dbReference type="PDB" id="6G2J">
    <property type="method" value="EM"/>
    <property type="resolution" value="3.30 A"/>
    <property type="chains" value="N=1-345"/>
</dbReference>
<dbReference type="PDB" id="6G72">
    <property type="method" value="EM"/>
    <property type="resolution" value="3.90 A"/>
    <property type="chains" value="N=1-345"/>
</dbReference>
<dbReference type="PDB" id="6ZR2">
    <property type="method" value="EM"/>
    <property type="resolution" value="3.10 A"/>
    <property type="chains" value="N=1-345"/>
</dbReference>
<dbReference type="PDB" id="6ZTQ">
    <property type="method" value="EM"/>
    <property type="resolution" value="3.00 A"/>
    <property type="chains" value="N=1-345"/>
</dbReference>
<dbReference type="PDB" id="7AK5">
    <property type="method" value="EM"/>
    <property type="resolution" value="3.17 A"/>
    <property type="chains" value="N=1-345"/>
</dbReference>
<dbReference type="PDB" id="7AK6">
    <property type="method" value="EM"/>
    <property type="resolution" value="3.82 A"/>
    <property type="chains" value="N=1-345"/>
</dbReference>
<dbReference type="PDB" id="7B93">
    <property type="method" value="EM"/>
    <property type="resolution" value="3.04 A"/>
    <property type="chains" value="N=1-345"/>
</dbReference>
<dbReference type="PDB" id="7PSA">
    <property type="method" value="EM"/>
    <property type="resolution" value="3.40 A"/>
    <property type="chains" value="N=1-345"/>
</dbReference>
<dbReference type="PDB" id="8C2S">
    <property type="method" value="EM"/>
    <property type="resolution" value="3.90 A"/>
    <property type="chains" value="N=1-345"/>
</dbReference>
<dbReference type="PDB" id="8CA3">
    <property type="method" value="EM"/>
    <property type="resolution" value="3.20 A"/>
    <property type="chains" value="N=1-345"/>
</dbReference>
<dbReference type="PDB" id="8CA5">
    <property type="method" value="EM"/>
    <property type="resolution" value="3.90 A"/>
    <property type="chains" value="N=1-345"/>
</dbReference>
<dbReference type="PDB" id="8IAO">
    <property type="method" value="EM"/>
    <property type="resolution" value="4.20 A"/>
    <property type="chains" value="N=1-345"/>
</dbReference>
<dbReference type="PDB" id="8IAQ">
    <property type="method" value="EM"/>
    <property type="resolution" value="3.40 A"/>
    <property type="chains" value="N=1-345"/>
</dbReference>
<dbReference type="PDB" id="8IB4">
    <property type="method" value="EM"/>
    <property type="resolution" value="4.30 A"/>
    <property type="chains" value="N=1-345"/>
</dbReference>
<dbReference type="PDB" id="8IB6">
    <property type="method" value="EM"/>
    <property type="resolution" value="3.30 A"/>
    <property type="chains" value="N=1-345"/>
</dbReference>
<dbReference type="PDB" id="8IB9">
    <property type="method" value="EM"/>
    <property type="resolution" value="4.30 A"/>
    <property type="chains" value="N=1-345"/>
</dbReference>
<dbReference type="PDB" id="8IBB">
    <property type="method" value="EM"/>
    <property type="resolution" value="3.30 A"/>
    <property type="chains" value="N=1-345"/>
</dbReference>
<dbReference type="PDB" id="8IBD">
    <property type="method" value="EM"/>
    <property type="resolution" value="4.20 A"/>
    <property type="chains" value="N=1-345"/>
</dbReference>
<dbReference type="PDB" id="8IBF">
    <property type="method" value="EM"/>
    <property type="resolution" value="3.30 A"/>
    <property type="chains" value="N=1-345"/>
</dbReference>
<dbReference type="PDB" id="8IC2">
    <property type="method" value="EM"/>
    <property type="resolution" value="6.30 A"/>
    <property type="chains" value="N=1-345"/>
</dbReference>
<dbReference type="PDB" id="8IC4">
    <property type="method" value="EM"/>
    <property type="resolution" value="3.20 A"/>
    <property type="chains" value="N=1-345"/>
</dbReference>
<dbReference type="PDB" id="8OLT">
    <property type="method" value="EM"/>
    <property type="resolution" value="2.84 A"/>
    <property type="chains" value="N=1-345"/>
</dbReference>
<dbReference type="PDB" id="8OM1">
    <property type="method" value="EM"/>
    <property type="resolution" value="2.39 A"/>
    <property type="chains" value="N=1-345"/>
</dbReference>
<dbReference type="PDB" id="8PW5">
    <property type="method" value="EM"/>
    <property type="resolution" value="3.60 A"/>
    <property type="chains" value="N1=1-345"/>
</dbReference>
<dbReference type="PDB" id="8PW6">
    <property type="method" value="EM"/>
    <property type="resolution" value="3.30 A"/>
    <property type="chains" value="N1=1-345"/>
</dbReference>
<dbReference type="PDB" id="8PW7">
    <property type="method" value="EM"/>
    <property type="resolution" value="3.50 A"/>
    <property type="chains" value="N1=1-345"/>
</dbReference>
<dbReference type="PDB" id="8RGP">
    <property type="method" value="EM"/>
    <property type="resolution" value="3.00 A"/>
    <property type="chains" value="N=1-345"/>
</dbReference>
<dbReference type="PDB" id="8RGQ">
    <property type="method" value="EM"/>
    <property type="resolution" value="3.00 A"/>
    <property type="chains" value="N=1-345"/>
</dbReference>
<dbReference type="PDB" id="8RGR">
    <property type="method" value="EM"/>
    <property type="resolution" value="2.90 A"/>
    <property type="chains" value="N=1-345"/>
</dbReference>
<dbReference type="PDB" id="8RGT">
    <property type="method" value="EM"/>
    <property type="resolution" value="3.10 A"/>
    <property type="chains" value="N=1-345"/>
</dbReference>
<dbReference type="PDB" id="8UCA">
    <property type="method" value="EM"/>
    <property type="resolution" value="3.70 A"/>
    <property type="chains" value="2/2a=1-345"/>
</dbReference>
<dbReference type="PDBsum" id="6G2J"/>
<dbReference type="PDBsum" id="6G72"/>
<dbReference type="PDBsum" id="6ZR2"/>
<dbReference type="PDBsum" id="6ZTQ"/>
<dbReference type="PDBsum" id="7AK5"/>
<dbReference type="PDBsum" id="7AK6"/>
<dbReference type="PDBsum" id="7B93"/>
<dbReference type="PDBsum" id="7PSA"/>
<dbReference type="PDBsum" id="8C2S"/>
<dbReference type="PDBsum" id="8CA3"/>
<dbReference type="PDBsum" id="8CA5"/>
<dbReference type="PDBsum" id="8IAO"/>
<dbReference type="PDBsum" id="8IAQ"/>
<dbReference type="PDBsum" id="8IB4"/>
<dbReference type="PDBsum" id="8IB6"/>
<dbReference type="PDBsum" id="8IB9"/>
<dbReference type="PDBsum" id="8IBB"/>
<dbReference type="PDBsum" id="8IBD"/>
<dbReference type="PDBsum" id="8IBF"/>
<dbReference type="PDBsum" id="8IC2"/>
<dbReference type="PDBsum" id="8IC4"/>
<dbReference type="PDBsum" id="8OLT"/>
<dbReference type="PDBsum" id="8OM1"/>
<dbReference type="PDBsum" id="8PW5"/>
<dbReference type="PDBsum" id="8PW6"/>
<dbReference type="PDBsum" id="8PW7"/>
<dbReference type="PDBsum" id="8RGP"/>
<dbReference type="PDBsum" id="8RGQ"/>
<dbReference type="PDBsum" id="8RGR"/>
<dbReference type="PDBsum" id="8RGT"/>
<dbReference type="PDBsum" id="8UCA"/>
<dbReference type="EMDB" id="EMD-16398"/>
<dbReference type="EMDB" id="EMD-16516"/>
<dbReference type="EMDB" id="EMD-16518"/>
<dbReference type="EMDB" id="EMD-16962"/>
<dbReference type="EMDB" id="EMD-16965"/>
<dbReference type="EMDB" id="EMD-17989"/>
<dbReference type="EMDB" id="EMD-17990"/>
<dbReference type="EMDB" id="EMD-17991"/>
<dbReference type="EMDB" id="EMD-19145"/>
<dbReference type="EMDB" id="EMD-19146"/>
<dbReference type="EMDB" id="EMD-19147"/>
<dbReference type="EMDB" id="EMD-19148"/>
<dbReference type="EMDB" id="EMD-35313"/>
<dbReference type="EMDB" id="EMD-35315"/>
<dbReference type="EMDB" id="EMD-35331"/>
<dbReference type="EMDB" id="EMD-35333"/>
<dbReference type="EMDB" id="EMD-35336"/>
<dbReference type="EMDB" id="EMD-35338"/>
<dbReference type="EMDB" id="EMD-35340"/>
<dbReference type="EMDB" id="EMD-35342"/>
<dbReference type="EMDB" id="EMD-35352"/>
<dbReference type="EMDB" id="EMD-35354"/>
<dbReference type="EMDB" id="EMD-42122"/>
<dbReference type="EMDB" id="EMD-4356"/>
<dbReference type="SMR" id="P03893"/>
<dbReference type="ComplexPortal" id="CPX-266">
    <property type="entry name" value="Mitochondrial respiratory chain complex I"/>
</dbReference>
<dbReference type="FunCoup" id="P03893">
    <property type="interactions" value="144"/>
</dbReference>
<dbReference type="IntAct" id="P03893">
    <property type="interactions" value="3"/>
</dbReference>
<dbReference type="MINT" id="P03893"/>
<dbReference type="STRING" id="10090.ENSMUSP00000080992"/>
<dbReference type="GlyGen" id="P03893">
    <property type="glycosylation" value="1 site, 1 O-linked glycan (1 site)"/>
</dbReference>
<dbReference type="MetOSite" id="P03893"/>
<dbReference type="PhosphoSitePlus" id="P03893"/>
<dbReference type="jPOST" id="P03893"/>
<dbReference type="PaxDb" id="10090-ENSMUSP00000080992"/>
<dbReference type="ProteomicsDB" id="287843"/>
<dbReference type="Pumba" id="P03893"/>
<dbReference type="Antibodypedia" id="47876">
    <property type="antibodies" value="64 antibodies from 19 providers"/>
</dbReference>
<dbReference type="Ensembl" id="ENSMUST00000082396.1">
    <property type="protein sequence ID" value="ENSMUSP00000080992.1"/>
    <property type="gene ID" value="ENSMUSG00000064345.1"/>
</dbReference>
<dbReference type="GeneID" id="17717"/>
<dbReference type="KEGG" id="mmu:17717"/>
<dbReference type="AGR" id="MGI:102500"/>
<dbReference type="CTD" id="4536"/>
<dbReference type="MGI" id="MGI:102500">
    <property type="gene designation" value="mt-Nd2"/>
</dbReference>
<dbReference type="VEuPathDB" id="HostDB:ENSMUSG00000064345"/>
<dbReference type="eggNOG" id="KOG4668">
    <property type="taxonomic scope" value="Eukaryota"/>
</dbReference>
<dbReference type="GeneTree" id="ENSGT00730000111348"/>
<dbReference type="HOGENOM" id="CLU_007100_1_3_1"/>
<dbReference type="InParanoid" id="P03893"/>
<dbReference type="OMA" id="HFWVPEV"/>
<dbReference type="OrthoDB" id="4092844at2759"/>
<dbReference type="PhylomeDB" id="P03893"/>
<dbReference type="Reactome" id="R-MMU-611105">
    <property type="pathway name" value="Respiratory electron transport"/>
</dbReference>
<dbReference type="Reactome" id="R-MMU-6799198">
    <property type="pathway name" value="Complex I biogenesis"/>
</dbReference>
<dbReference type="ChiTaRS" id="mt-Nd2">
    <property type="organism name" value="mouse"/>
</dbReference>
<dbReference type="PRO" id="PR:P03893"/>
<dbReference type="Proteomes" id="UP000000589">
    <property type="component" value="Mitochondrion MT"/>
</dbReference>
<dbReference type="RNAct" id="P03893">
    <property type="molecule type" value="protein"/>
</dbReference>
<dbReference type="Bgee" id="ENSMUSG00000064345">
    <property type="expression patterns" value="Expressed in dentate gyrus of hippocampal formation granule cell and 63 other cell types or tissues"/>
</dbReference>
<dbReference type="ExpressionAtlas" id="P03893">
    <property type="expression patterns" value="baseline and differential"/>
</dbReference>
<dbReference type="GO" id="GO:0005743">
    <property type="term" value="C:mitochondrial inner membrane"/>
    <property type="evidence" value="ECO:0000314"/>
    <property type="project" value="UniProtKB"/>
</dbReference>
<dbReference type="GO" id="GO:0005739">
    <property type="term" value="C:mitochondrion"/>
    <property type="evidence" value="ECO:0007005"/>
    <property type="project" value="MGI"/>
</dbReference>
<dbReference type="GO" id="GO:0045271">
    <property type="term" value="C:respiratory chain complex I"/>
    <property type="evidence" value="ECO:0000314"/>
    <property type="project" value="UniProtKB"/>
</dbReference>
<dbReference type="GO" id="GO:0008137">
    <property type="term" value="F:NADH dehydrogenase (ubiquinone) activity"/>
    <property type="evidence" value="ECO:0000250"/>
    <property type="project" value="UniProtKB"/>
</dbReference>
<dbReference type="GO" id="GO:0009060">
    <property type="term" value="P:aerobic respiration"/>
    <property type="evidence" value="ECO:0000303"/>
    <property type="project" value="ComplexPortal"/>
</dbReference>
<dbReference type="GO" id="GO:0006120">
    <property type="term" value="P:mitochondrial electron transport, NADH to ubiquinone"/>
    <property type="evidence" value="ECO:0000250"/>
    <property type="project" value="UniProtKB"/>
</dbReference>
<dbReference type="GO" id="GO:0032981">
    <property type="term" value="P:mitochondrial respiratory chain complex I assembly"/>
    <property type="evidence" value="ECO:0000250"/>
    <property type="project" value="UniProtKB"/>
</dbReference>
<dbReference type="GO" id="GO:0042776">
    <property type="term" value="P:proton motive force-driven mitochondrial ATP synthesis"/>
    <property type="evidence" value="ECO:0000303"/>
    <property type="project" value="ComplexPortal"/>
</dbReference>
<dbReference type="GO" id="GO:0072593">
    <property type="term" value="P:reactive oxygen species metabolic process"/>
    <property type="evidence" value="ECO:0000314"/>
    <property type="project" value="MGI"/>
</dbReference>
<dbReference type="InterPro" id="IPR050175">
    <property type="entry name" value="Complex_I_Subunit_2"/>
</dbReference>
<dbReference type="InterPro" id="IPR010933">
    <property type="entry name" value="NADH_DH_su2_C"/>
</dbReference>
<dbReference type="InterPro" id="IPR003917">
    <property type="entry name" value="NADH_UbQ_OxRdtase_chain2"/>
</dbReference>
<dbReference type="InterPro" id="IPR001750">
    <property type="entry name" value="ND/Mrp_TM"/>
</dbReference>
<dbReference type="PANTHER" id="PTHR46552">
    <property type="entry name" value="NADH-UBIQUINONE OXIDOREDUCTASE CHAIN 2"/>
    <property type="match status" value="1"/>
</dbReference>
<dbReference type="PANTHER" id="PTHR46552:SF1">
    <property type="entry name" value="NADH-UBIQUINONE OXIDOREDUCTASE CHAIN 2"/>
    <property type="match status" value="1"/>
</dbReference>
<dbReference type="Pfam" id="PF06444">
    <property type="entry name" value="NADH_dehy_S2_C"/>
    <property type="match status" value="1"/>
</dbReference>
<dbReference type="Pfam" id="PF00361">
    <property type="entry name" value="Proton_antipo_M"/>
    <property type="match status" value="1"/>
</dbReference>
<dbReference type="PRINTS" id="PR01436">
    <property type="entry name" value="NADHDHGNASE2"/>
</dbReference>
<sequence length="345" mass="38752">MNPITLAIIYFTIFLGPVITMSSTNLMLMWVGLEFSLLAIIPMLINKKNPRSTEAATKYFVTQATASMIILLAIVLNYKQLGTWMFQQQTNGLILNMTLMALSMKLGLAPFHFWLPEVTQGIPLHMGLILLTWQKIAPLSILIQIYPLLNSTIILMLAITSIFMGAWGGLNQTQMRKIMAYSSIAHMGWMLAILPYNPSLTLLNLMIYIILTAPMFMALMLNNSMTINSISLLWNKTPAMLTMISLMLLSLGGLPPLTGFLPKWIIITELMKNNCLIMATLMAMMALLNLFFYTRLIYSTSLTMFPTNNNSKMMTHQTKTKPNLMFSTLAIMSTMTLPLAPQLIT</sequence>
<keyword id="KW-0002">3D-structure</keyword>
<keyword id="KW-0903">Direct protein sequencing</keyword>
<keyword id="KW-0249">Electron transport</keyword>
<keyword id="KW-0472">Membrane</keyword>
<keyword id="KW-0496">Mitochondrion</keyword>
<keyword id="KW-0999">Mitochondrion inner membrane</keyword>
<keyword id="KW-0520">NAD</keyword>
<keyword id="KW-1185">Reference proteome</keyword>
<keyword id="KW-0679">Respiratory chain</keyword>
<keyword id="KW-1278">Translocase</keyword>
<keyword id="KW-0812">Transmembrane</keyword>
<keyword id="KW-1133">Transmembrane helix</keyword>
<keyword id="KW-0813">Transport</keyword>
<keyword id="KW-0830">Ubiquinone</keyword>
<reference key="1">
    <citation type="journal article" date="1981" name="Cell">
        <title>Sequence and gene organization of mouse mitochondrial DNA.</title>
        <authorList>
            <person name="Bibb M.J."/>
            <person name="van Etten R.A."/>
            <person name="Wright C.T."/>
            <person name="Walberg M.W."/>
            <person name="Clayton D.A."/>
        </authorList>
    </citation>
    <scope>NUCLEOTIDE SEQUENCE [GENOMIC DNA]</scope>
</reference>
<reference key="2">
    <citation type="journal article" date="2003" name="Nucleic Acids Res.">
        <title>Revisiting the mouse mitochondrial DNA sequence.</title>
        <authorList>
            <person name="Bayona-Bafaluy M.P."/>
            <person name="Acin-Perez R."/>
            <person name="Mullikin J.C."/>
            <person name="Park J.S."/>
            <person name="Moreno-Loshuertos R."/>
            <person name="Hu P."/>
            <person name="Perez-Martos A."/>
            <person name="Fernandez-Silva P."/>
            <person name="Bai Y."/>
            <person name="Enriquez J.A."/>
        </authorList>
    </citation>
    <scope>NUCLEOTIDE SEQUENCE [LARGE SCALE GENOMIC DNA]</scope>
    <source>
        <strain>C57BL/6J</strain>
    </source>
</reference>
<reference key="3">
    <citation type="submission" date="2009-01" db="UniProtKB">
        <authorList>
            <person name="Lubec G."/>
            <person name="Kang S.U."/>
            <person name="Sunyer B."/>
            <person name="Chen W.-Q."/>
        </authorList>
    </citation>
    <scope>PROTEIN SEQUENCE OF 237-272 AND 296-312</scope>
    <scope>IDENTIFICATION BY MASS SPECTROMETRY</scope>
    <source>
        <strain>C57BL/6J</strain>
        <strain>OF1</strain>
        <tissue>Brain</tissue>
        <tissue>Hippocampus</tissue>
    </source>
</reference>
<reference key="4">
    <citation type="journal article" date="2010" name="Cell">
        <title>A tissue-specific atlas of mouse protein phosphorylation and expression.</title>
        <authorList>
            <person name="Huttlin E.L."/>
            <person name="Jedrychowski M.P."/>
            <person name="Elias J.E."/>
            <person name="Goswami T."/>
            <person name="Rad R."/>
            <person name="Beausoleil S.A."/>
            <person name="Villen J."/>
            <person name="Haas W."/>
            <person name="Sowa M.E."/>
            <person name="Gygi S.P."/>
        </authorList>
    </citation>
    <scope>IDENTIFICATION BY MASS SPECTROMETRY [LARGE SCALE ANALYSIS]</scope>
    <source>
        <tissue>Brown adipose tissue</tissue>
        <tissue>Heart</tissue>
        <tissue>Kidney</tissue>
        <tissue>Liver</tissue>
    </source>
</reference>
<reference evidence="7" key="5">
    <citation type="journal article" date="2024" name="Nat. Struct. Mol. Biol.">
        <title>SCAF1 drives the compositional diversity of mammalian respirasomes.</title>
        <authorList>
            <person name="Vercellino I."/>
            <person name="Sazanov L.A."/>
        </authorList>
    </citation>
    <scope>STRUCTURE BY ELECTRON MICROSCOPY (3.60 ANGSTROMS) IN COMPLEX WITH MITOCHONDRIAL RESPIRATORY SUPERCOMPLEX</scope>
    <scope>FUNCTION</scope>
    <scope>SUBCELLULAR LOCATION</scope>
    <scope>SUBUNIT</scope>
</reference>
<protein>
    <recommendedName>
        <fullName evidence="5">NADH-ubiquinone oxidoreductase chain 2</fullName>
        <ecNumber evidence="1">7.1.1.2</ecNumber>
    </recommendedName>
    <alternativeName>
        <fullName>NADH dehydrogenase subunit 2</fullName>
    </alternativeName>
</protein>